<organism>
    <name type="scientific">Danio rerio</name>
    <name type="common">Zebrafish</name>
    <name type="synonym">Brachydanio rerio</name>
    <dbReference type="NCBI Taxonomy" id="7955"/>
    <lineage>
        <taxon>Eukaryota</taxon>
        <taxon>Metazoa</taxon>
        <taxon>Chordata</taxon>
        <taxon>Craniata</taxon>
        <taxon>Vertebrata</taxon>
        <taxon>Euteleostomi</taxon>
        <taxon>Actinopterygii</taxon>
        <taxon>Neopterygii</taxon>
        <taxon>Teleostei</taxon>
        <taxon>Ostariophysi</taxon>
        <taxon>Cypriniformes</taxon>
        <taxon>Danionidae</taxon>
        <taxon>Danioninae</taxon>
        <taxon>Danio</taxon>
    </lineage>
</organism>
<sequence>MIGKLKQNLLVACLVISSVTVFYLCRHAMDCHHRIEERSQPLLSSLHATLRTGQNLSTPFIYNKDMPLIFIGGVPRSGTTLMRAMLDAHPDVRCGEETRVIPRILAMKQMWSRSGREKMRLDEAGVTDEVLDSAMQAFLLEIIVKHGEPANYLCNKDPFALKSLTYLAKIFPHAKFILMVRDGRASVHSMISRKVTIAGFDLSSYRDCLTKWNRAIETMYTQCLEAADKCLPVHYEQLVLHPEKWMRTLLRFLNIPWNDAVLHHEELIGKAGGVSLSKVERSTDQVIKPVNVEALSKWVGKIPLDVQRDMAVIAPMLARLGYDPHANPPNYGRPDPLVLDNTRRLQKSPEKPNPS</sequence>
<reference key="1">
    <citation type="submission" date="2002-05" db="EMBL/GenBank/DDBJ databases">
        <title>Tyrosylprotein sulfotransferase-1 from Danio rerio.</title>
        <authorList>
            <person name="Moore K.L."/>
            <person name="Dudley A.A."/>
        </authorList>
    </citation>
    <scope>NUCLEOTIDE SEQUENCE [MRNA]</scope>
    <source>
        <strain>AB</strain>
    </source>
</reference>
<reference key="2">
    <citation type="submission" date="2003-08" db="EMBL/GenBank/DDBJ databases">
        <authorList>
            <consortium name="NIH - Zebrafish Gene Collection (ZGC) project"/>
        </authorList>
    </citation>
    <scope>NUCLEOTIDE SEQUENCE [LARGE SCALE MRNA]</scope>
    <source>
        <strain>AB</strain>
    </source>
</reference>
<reference key="3">
    <citation type="submission" date="1999-11" db="EMBL/GenBank/DDBJ databases">
        <title>Isolation of zebrafish tyrosylprotein sulfotransferase 1 cDNA.</title>
        <authorList>
            <person name="Kim C.H."/>
        </authorList>
    </citation>
    <scope>NUCLEOTIDE SEQUENCE [MRNA] OF 1-256</scope>
</reference>
<keyword id="KW-1015">Disulfide bond</keyword>
<keyword id="KW-0325">Glycoprotein</keyword>
<keyword id="KW-0333">Golgi apparatus</keyword>
<keyword id="KW-0472">Membrane</keyword>
<keyword id="KW-1185">Reference proteome</keyword>
<keyword id="KW-0735">Signal-anchor</keyword>
<keyword id="KW-0808">Transferase</keyword>
<keyword id="KW-0812">Transmembrane</keyword>
<keyword id="KW-1133">Transmembrane helix</keyword>
<comment type="function">
    <text evidence="1">Catalyzes the O-sulfation of tyrosine residues within acidic motifs of polypeptides, using 3'-phosphoadenylyl sulfate (PAPS) as cosubstrate.</text>
</comment>
<comment type="catalytic activity">
    <reaction evidence="1">
        <text>L-tyrosyl-[protein] + 3'-phosphoadenylyl sulfate = O-sulfo-L-tyrosine-[protein] + adenosine 3',5'-bisphosphate + H(+)</text>
        <dbReference type="Rhea" id="RHEA:16801"/>
        <dbReference type="Rhea" id="RHEA-COMP:10136"/>
        <dbReference type="Rhea" id="RHEA-COMP:11688"/>
        <dbReference type="ChEBI" id="CHEBI:15378"/>
        <dbReference type="ChEBI" id="CHEBI:46858"/>
        <dbReference type="ChEBI" id="CHEBI:58339"/>
        <dbReference type="ChEBI" id="CHEBI:58343"/>
        <dbReference type="ChEBI" id="CHEBI:65286"/>
        <dbReference type="EC" id="2.8.2.20"/>
    </reaction>
</comment>
<comment type="subcellular location">
    <subcellularLocation>
        <location evidence="1">Golgi apparatus membrane</location>
        <topology evidence="1">Single-pass type II membrane protein</topology>
    </subcellularLocation>
</comment>
<comment type="similarity">
    <text evidence="5">Belongs to the protein sulfotransferase family.</text>
</comment>
<dbReference type="EC" id="2.8.2.20" evidence="1"/>
<dbReference type="EMBL" id="AF510736">
    <property type="protein sequence ID" value="AAO42986.1"/>
    <property type="molecule type" value="mRNA"/>
</dbReference>
<dbReference type="EMBL" id="BC056786">
    <property type="protein sequence ID" value="AAH56786.1"/>
    <property type="molecule type" value="mRNA"/>
</dbReference>
<dbReference type="EMBL" id="AF204241">
    <property type="protein sequence ID" value="AAF18448.1"/>
    <property type="molecule type" value="mRNA"/>
</dbReference>
<dbReference type="RefSeq" id="NP_571478.1">
    <property type="nucleotide sequence ID" value="NM_131403.1"/>
</dbReference>
<dbReference type="SMR" id="Q9PTE6"/>
<dbReference type="FunCoup" id="Q9PTE6">
    <property type="interactions" value="331"/>
</dbReference>
<dbReference type="STRING" id="7955.ENSDARP00000101352"/>
<dbReference type="GlyCosmos" id="Q9PTE6">
    <property type="glycosylation" value="1 site, No reported glycans"/>
</dbReference>
<dbReference type="PaxDb" id="7955-ENSDARP00000101352"/>
<dbReference type="Ensembl" id="ENSDART00000114464">
    <property type="protein sequence ID" value="ENSDARP00000101352"/>
    <property type="gene ID" value="ENSDARG00000073872"/>
</dbReference>
<dbReference type="Ensembl" id="ENSDART00000181936">
    <property type="protein sequence ID" value="ENSDARP00000154770"/>
    <property type="gene ID" value="ENSDARG00000073872"/>
</dbReference>
<dbReference type="Ensembl" id="ENSDART00000187438">
    <property type="protein sequence ID" value="ENSDARP00000147623"/>
    <property type="gene ID" value="ENSDARG00000073872"/>
</dbReference>
<dbReference type="GeneID" id="30677"/>
<dbReference type="KEGG" id="dre:30677"/>
<dbReference type="AGR" id="ZFIN:ZDB-GENE-000210-10"/>
<dbReference type="CTD" id="8460"/>
<dbReference type="ZFIN" id="ZDB-GENE-000210-10">
    <property type="gene designation" value="tpst1"/>
</dbReference>
<dbReference type="eggNOG" id="KOG3988">
    <property type="taxonomic scope" value="Eukaryota"/>
</dbReference>
<dbReference type="HOGENOM" id="CLU_046916_0_1_1"/>
<dbReference type="InParanoid" id="Q9PTE6"/>
<dbReference type="OrthoDB" id="545675at2759"/>
<dbReference type="PhylomeDB" id="Q9PTE6"/>
<dbReference type="PRO" id="PR:Q9PTE6"/>
<dbReference type="Proteomes" id="UP000000437">
    <property type="component" value="Alternate scaffold 15"/>
</dbReference>
<dbReference type="Proteomes" id="UP000000437">
    <property type="component" value="Chromosome 15"/>
</dbReference>
<dbReference type="Bgee" id="ENSDARG00000073872">
    <property type="expression patterns" value="Expressed in granulocyte and 38 other cell types or tissues"/>
</dbReference>
<dbReference type="ExpressionAtlas" id="Q9PTE6">
    <property type="expression patterns" value="baseline"/>
</dbReference>
<dbReference type="GO" id="GO:0005794">
    <property type="term" value="C:Golgi apparatus"/>
    <property type="evidence" value="ECO:0000318"/>
    <property type="project" value="GO_Central"/>
</dbReference>
<dbReference type="GO" id="GO:0000139">
    <property type="term" value="C:Golgi membrane"/>
    <property type="evidence" value="ECO:0000250"/>
    <property type="project" value="UniProtKB"/>
</dbReference>
<dbReference type="GO" id="GO:0008476">
    <property type="term" value="F:protein-tyrosine sulfotransferase activity"/>
    <property type="evidence" value="ECO:0000250"/>
    <property type="project" value="UniProtKB"/>
</dbReference>
<dbReference type="GO" id="GO:0043687">
    <property type="term" value="P:post-translational protein modification"/>
    <property type="evidence" value="ECO:0000250"/>
    <property type="project" value="UniProtKB"/>
</dbReference>
<dbReference type="FunFam" id="3.40.50.300:FF:000290">
    <property type="entry name" value="Protein-tyrosine sulfotransferase"/>
    <property type="match status" value="1"/>
</dbReference>
<dbReference type="Gene3D" id="3.40.50.300">
    <property type="entry name" value="P-loop containing nucleotide triphosphate hydrolases"/>
    <property type="match status" value="1"/>
</dbReference>
<dbReference type="InterPro" id="IPR027417">
    <property type="entry name" value="P-loop_NTPase"/>
</dbReference>
<dbReference type="InterPro" id="IPR026634">
    <property type="entry name" value="TPST-like"/>
</dbReference>
<dbReference type="PANTHER" id="PTHR12788:SF4">
    <property type="entry name" value="PROTEIN-TYROSINE SULFOTRANSFERASE 1"/>
    <property type="match status" value="1"/>
</dbReference>
<dbReference type="PANTHER" id="PTHR12788">
    <property type="entry name" value="PROTEIN-TYROSINE SULFOTRANSFERASE 2"/>
    <property type="match status" value="1"/>
</dbReference>
<dbReference type="Pfam" id="PF13469">
    <property type="entry name" value="Sulfotransfer_3"/>
    <property type="match status" value="1"/>
</dbReference>
<dbReference type="SUPFAM" id="SSF52540">
    <property type="entry name" value="P-loop containing nucleoside triphosphate hydrolases"/>
    <property type="match status" value="1"/>
</dbReference>
<evidence type="ECO:0000250" key="1">
    <source>
        <dbReference type="UniProtKB" id="O60507"/>
    </source>
</evidence>
<evidence type="ECO:0000250" key="2">
    <source>
        <dbReference type="UniProtKB" id="O60704"/>
    </source>
</evidence>
<evidence type="ECO:0000255" key="3"/>
<evidence type="ECO:0000256" key="4">
    <source>
        <dbReference type="SAM" id="MobiDB-lite"/>
    </source>
</evidence>
<evidence type="ECO:0000305" key="5"/>
<protein>
    <recommendedName>
        <fullName>Protein-tyrosine sulfotransferase 1</fullName>
        <ecNumber evidence="1">2.8.2.20</ecNumber>
    </recommendedName>
    <alternativeName>
        <fullName>Tyrosylprotein sulfotransferase 1</fullName>
        <shortName>TPST-1</shortName>
    </alternativeName>
</protein>
<gene>
    <name type="primary">tpst1</name>
</gene>
<name>TPST1_DANRE</name>
<feature type="chain" id="PRO_0000189828" description="Protein-tyrosine sulfotransferase 1">
    <location>
        <begin position="1"/>
        <end position="355"/>
    </location>
</feature>
<feature type="topological domain" description="Cytoplasmic" evidence="3">
    <location>
        <begin position="1"/>
        <end position="8"/>
    </location>
</feature>
<feature type="transmembrane region" description="Helical; Signal-anchor for type II membrane protein" evidence="3">
    <location>
        <begin position="9"/>
        <end position="25"/>
    </location>
</feature>
<feature type="topological domain" description="Lumenal" evidence="3">
    <location>
        <begin position="26"/>
        <end position="355"/>
    </location>
</feature>
<feature type="region of interest" description="Interaction with peptide substrate" evidence="1">
    <location>
        <begin position="99"/>
        <end position="103"/>
    </location>
</feature>
<feature type="region of interest" description="Disordered" evidence="4">
    <location>
        <begin position="325"/>
        <end position="355"/>
    </location>
</feature>
<feature type="compositionally biased region" description="Basic and acidic residues" evidence="4">
    <location>
        <begin position="341"/>
        <end position="355"/>
    </location>
</feature>
<feature type="active site" description="Proton donor/acceptor" evidence="2">
    <location>
        <position position="97"/>
    </location>
</feature>
<feature type="binding site" evidence="1">
    <location>
        <begin position="76"/>
        <end position="80"/>
    </location>
    <ligand>
        <name>3'-phosphoadenylyl sulfate</name>
        <dbReference type="ChEBI" id="CHEBI:58339"/>
    </ligand>
</feature>
<feature type="binding site" evidence="1">
    <location>
        <position position="181"/>
    </location>
    <ligand>
        <name>3'-phosphoadenylyl sulfate</name>
        <dbReference type="ChEBI" id="CHEBI:58339"/>
    </ligand>
</feature>
<feature type="binding site" evidence="1">
    <location>
        <position position="189"/>
    </location>
    <ligand>
        <name>3'-phosphoadenylyl sulfate</name>
        <dbReference type="ChEBI" id="CHEBI:58339"/>
    </ligand>
</feature>
<feature type="binding site" evidence="1">
    <location>
        <position position="193"/>
    </location>
    <ligand>
        <name>3'-phosphoadenylyl sulfate</name>
        <dbReference type="ChEBI" id="CHEBI:58339"/>
    </ligand>
</feature>
<feature type="binding site" evidence="1">
    <location>
        <position position="235"/>
    </location>
    <ligand>
        <name>3'-phosphoadenylyl sulfate</name>
        <dbReference type="ChEBI" id="CHEBI:58339"/>
    </ligand>
</feature>
<feature type="binding site" evidence="1">
    <location>
        <begin position="282"/>
        <end position="291"/>
    </location>
    <ligand>
        <name>3'-phosphoadenylyl sulfate</name>
        <dbReference type="ChEBI" id="CHEBI:58339"/>
    </ligand>
</feature>
<feature type="binding site" evidence="1">
    <location>
        <position position="297"/>
    </location>
    <ligand>
        <name>3'-phosphoadenylyl sulfate</name>
        <dbReference type="ChEBI" id="CHEBI:58339"/>
    </ligand>
</feature>
<feature type="site" description="Transition state stabilizer" evidence="2">
    <location>
        <position position="156"/>
    </location>
</feature>
<feature type="site" description="Transition state stabilizer" evidence="2">
    <location>
        <position position="282"/>
    </location>
</feature>
<feature type="glycosylation site" description="N-linked (GlcNAc...) asparagine" evidence="3">
    <location>
        <position position="55"/>
    </location>
</feature>
<feature type="disulfide bond" evidence="2">
    <location>
        <begin position="94"/>
        <end position="154"/>
    </location>
</feature>
<feature type="disulfide bond" evidence="2">
    <location>
        <begin position="223"/>
        <end position="230"/>
    </location>
</feature>
<feature type="sequence conflict" description="In Ref. 3; AAF18448." evidence="5" ref="3">
    <original>K</original>
    <variation>R</variation>
    <location>
        <position position="211"/>
    </location>
</feature>
<accession>Q9PTE6</accession>
<accession>Q804S9</accession>
<proteinExistence type="evidence at transcript level"/>